<organism>
    <name type="scientific">Bacillus cereus (strain 03BB102)</name>
    <dbReference type="NCBI Taxonomy" id="572264"/>
    <lineage>
        <taxon>Bacteria</taxon>
        <taxon>Bacillati</taxon>
        <taxon>Bacillota</taxon>
        <taxon>Bacilli</taxon>
        <taxon>Bacillales</taxon>
        <taxon>Bacillaceae</taxon>
        <taxon>Bacillus</taxon>
        <taxon>Bacillus cereus group</taxon>
    </lineage>
</organism>
<protein>
    <recommendedName>
        <fullName evidence="1">Glutamate-1-semialdehyde 2,1-aminomutase 2</fullName>
        <shortName evidence="1">GSA 2</shortName>
        <ecNumber evidence="1">5.4.3.8</ecNumber>
    </recommendedName>
    <alternativeName>
        <fullName evidence="1">Glutamate-1-semialdehyde aminotransferase 2</fullName>
        <shortName evidence="1">GSA-AT 2</shortName>
    </alternativeName>
</protein>
<sequence length="429" mass="46004">MKKFDKSIAAFEEAQDLMPGGVNSPVRAFKSVGMNPLFMERGKGSKVYDIDGNEYIDYVLSWGPLIHGHANDRVVEALKAVAERGTSFGAPTEIENKLAKLVIERVPSIEIVRMVNSGTEATMSALRLARGYTGRNKILKFIGCYHGHGDSLLIKAGSGVATLGLPDSPGVPEGVAKNTITVAYNDLESVKYAFEQFGDDIACVIVEPVAGNMGVVPPQPGFLEGLREVTEQNGALLIFDEVMTGFRVAYNCGQGYYGVTPDLTCLGKVIGGGLPVGAYGGKAEIMRQVAPSGPIYQAGTLSGNPLAMAAGYETLVQLTPESYVEFERKAEMLEAGLRKAAEKHGIPHHINRAGSMIGIFFTDEPVINYDAAKSSNLQFFAAYYREMVEQGVFLPPSQFEGLFLSTAHSDADIEATIAAAEIAMSKLKA</sequence>
<gene>
    <name evidence="1" type="primary">hemL2</name>
    <name type="ordered locus">BCA_4573</name>
</gene>
<dbReference type="EC" id="5.4.3.8" evidence="1"/>
<dbReference type="EMBL" id="CP001407">
    <property type="protein sequence ID" value="ACO29115.1"/>
    <property type="molecule type" value="Genomic_DNA"/>
</dbReference>
<dbReference type="SMR" id="C1ETQ7"/>
<dbReference type="KEGG" id="bcx:BCA_4573"/>
<dbReference type="PATRIC" id="fig|572264.18.peg.4521"/>
<dbReference type="UniPathway" id="UPA00251">
    <property type="reaction ID" value="UER00317"/>
</dbReference>
<dbReference type="Proteomes" id="UP000002210">
    <property type="component" value="Chromosome"/>
</dbReference>
<dbReference type="GO" id="GO:0005737">
    <property type="term" value="C:cytoplasm"/>
    <property type="evidence" value="ECO:0007669"/>
    <property type="project" value="UniProtKB-SubCell"/>
</dbReference>
<dbReference type="GO" id="GO:0042286">
    <property type="term" value="F:glutamate-1-semialdehyde 2,1-aminomutase activity"/>
    <property type="evidence" value="ECO:0007669"/>
    <property type="project" value="UniProtKB-UniRule"/>
</dbReference>
<dbReference type="GO" id="GO:0030170">
    <property type="term" value="F:pyridoxal phosphate binding"/>
    <property type="evidence" value="ECO:0007669"/>
    <property type="project" value="InterPro"/>
</dbReference>
<dbReference type="GO" id="GO:0008483">
    <property type="term" value="F:transaminase activity"/>
    <property type="evidence" value="ECO:0007669"/>
    <property type="project" value="InterPro"/>
</dbReference>
<dbReference type="GO" id="GO:0006782">
    <property type="term" value="P:protoporphyrinogen IX biosynthetic process"/>
    <property type="evidence" value="ECO:0007669"/>
    <property type="project" value="UniProtKB-UniRule"/>
</dbReference>
<dbReference type="CDD" id="cd00610">
    <property type="entry name" value="OAT_like"/>
    <property type="match status" value="1"/>
</dbReference>
<dbReference type="FunFam" id="3.40.640.10:FF:000021">
    <property type="entry name" value="Glutamate-1-semialdehyde 2,1-aminomutase"/>
    <property type="match status" value="1"/>
</dbReference>
<dbReference type="Gene3D" id="3.90.1150.10">
    <property type="entry name" value="Aspartate Aminotransferase, domain 1"/>
    <property type="match status" value="1"/>
</dbReference>
<dbReference type="Gene3D" id="3.40.640.10">
    <property type="entry name" value="Type I PLP-dependent aspartate aminotransferase-like (Major domain)"/>
    <property type="match status" value="1"/>
</dbReference>
<dbReference type="HAMAP" id="MF_00375">
    <property type="entry name" value="HemL_aminotrans_3"/>
    <property type="match status" value="1"/>
</dbReference>
<dbReference type="InterPro" id="IPR004639">
    <property type="entry name" value="4pyrrol_synth_GluAld_NH2Trfase"/>
</dbReference>
<dbReference type="InterPro" id="IPR005814">
    <property type="entry name" value="Aminotrans_3"/>
</dbReference>
<dbReference type="InterPro" id="IPR049704">
    <property type="entry name" value="Aminotrans_3_PPA_site"/>
</dbReference>
<dbReference type="InterPro" id="IPR015424">
    <property type="entry name" value="PyrdxlP-dep_Trfase"/>
</dbReference>
<dbReference type="InterPro" id="IPR015421">
    <property type="entry name" value="PyrdxlP-dep_Trfase_major"/>
</dbReference>
<dbReference type="InterPro" id="IPR015422">
    <property type="entry name" value="PyrdxlP-dep_Trfase_small"/>
</dbReference>
<dbReference type="NCBIfam" id="TIGR00713">
    <property type="entry name" value="hemL"/>
    <property type="match status" value="1"/>
</dbReference>
<dbReference type="NCBIfam" id="NF000818">
    <property type="entry name" value="PRK00062.1"/>
    <property type="match status" value="1"/>
</dbReference>
<dbReference type="PANTHER" id="PTHR43713">
    <property type="entry name" value="GLUTAMATE-1-SEMIALDEHYDE 2,1-AMINOMUTASE"/>
    <property type="match status" value="1"/>
</dbReference>
<dbReference type="PANTHER" id="PTHR43713:SF3">
    <property type="entry name" value="GLUTAMATE-1-SEMIALDEHYDE 2,1-AMINOMUTASE 1, CHLOROPLASTIC-RELATED"/>
    <property type="match status" value="1"/>
</dbReference>
<dbReference type="Pfam" id="PF00202">
    <property type="entry name" value="Aminotran_3"/>
    <property type="match status" value="1"/>
</dbReference>
<dbReference type="SUPFAM" id="SSF53383">
    <property type="entry name" value="PLP-dependent transferases"/>
    <property type="match status" value="1"/>
</dbReference>
<dbReference type="PROSITE" id="PS00600">
    <property type="entry name" value="AA_TRANSFER_CLASS_3"/>
    <property type="match status" value="1"/>
</dbReference>
<keyword id="KW-0963">Cytoplasm</keyword>
<keyword id="KW-0413">Isomerase</keyword>
<keyword id="KW-0627">Porphyrin biosynthesis</keyword>
<keyword id="KW-0663">Pyridoxal phosphate</keyword>
<proteinExistence type="inferred from homology"/>
<feature type="chain" id="PRO_0000382264" description="Glutamate-1-semialdehyde 2,1-aminomutase 2">
    <location>
        <begin position="1"/>
        <end position="429"/>
    </location>
</feature>
<feature type="modified residue" description="N6-(pyridoxal phosphate)lysine" evidence="1">
    <location>
        <position position="268"/>
    </location>
</feature>
<reference key="1">
    <citation type="submission" date="2009-02" db="EMBL/GenBank/DDBJ databases">
        <title>Genome sequence of Bacillus cereus 03BB102.</title>
        <authorList>
            <person name="Dodson R.J."/>
            <person name="Jackson P."/>
            <person name="Munk A.C."/>
            <person name="Brettin T."/>
            <person name="Bruce D."/>
            <person name="Detter C."/>
            <person name="Tapia R."/>
            <person name="Han C."/>
            <person name="Sutton G."/>
            <person name="Sims D."/>
        </authorList>
    </citation>
    <scope>NUCLEOTIDE SEQUENCE [LARGE SCALE GENOMIC DNA]</scope>
    <source>
        <strain>03BB102</strain>
    </source>
</reference>
<comment type="catalytic activity">
    <reaction evidence="1">
        <text>(S)-4-amino-5-oxopentanoate = 5-aminolevulinate</text>
        <dbReference type="Rhea" id="RHEA:14265"/>
        <dbReference type="ChEBI" id="CHEBI:57501"/>
        <dbReference type="ChEBI" id="CHEBI:356416"/>
        <dbReference type="EC" id="5.4.3.8"/>
    </reaction>
</comment>
<comment type="cofactor">
    <cofactor evidence="1">
        <name>pyridoxal 5'-phosphate</name>
        <dbReference type="ChEBI" id="CHEBI:597326"/>
    </cofactor>
</comment>
<comment type="pathway">
    <text evidence="1">Porphyrin-containing compound metabolism; protoporphyrin-IX biosynthesis; 5-aminolevulinate from L-glutamyl-tRNA(Glu): step 2/2.</text>
</comment>
<comment type="subunit">
    <text evidence="1">Homodimer.</text>
</comment>
<comment type="subcellular location">
    <subcellularLocation>
        <location evidence="1">Cytoplasm</location>
    </subcellularLocation>
</comment>
<comment type="similarity">
    <text evidence="1">Belongs to the class-III pyridoxal-phosphate-dependent aminotransferase family. HemL subfamily.</text>
</comment>
<accession>C1ETQ7</accession>
<name>GSA2_BACC3</name>
<evidence type="ECO:0000255" key="1">
    <source>
        <dbReference type="HAMAP-Rule" id="MF_00375"/>
    </source>
</evidence>